<feature type="signal peptide" evidence="2">
    <location>
        <begin position="1"/>
        <end position="18"/>
    </location>
</feature>
<feature type="chain" id="PRO_0000014715" description="Contactin-4">
    <location>
        <begin position="19"/>
        <end position="1000"/>
    </location>
</feature>
<feature type="propeptide" id="PRO_0000014716" description="Removed in mature form" evidence="2">
    <location>
        <begin position="1001"/>
        <end position="1026"/>
    </location>
</feature>
<feature type="domain" description="Ig-like C2-type 1">
    <location>
        <begin position="32"/>
        <end position="117"/>
    </location>
</feature>
<feature type="domain" description="Ig-like C2-type 2">
    <location>
        <begin position="122"/>
        <end position="206"/>
    </location>
</feature>
<feature type="domain" description="Ig-like C2-type 3">
    <location>
        <begin position="225"/>
        <end position="311"/>
    </location>
</feature>
<feature type="domain" description="Ig-like C2-type 4">
    <location>
        <begin position="316"/>
        <end position="400"/>
    </location>
</feature>
<feature type="domain" description="Ig-like C2-type 5">
    <location>
        <begin position="406"/>
        <end position="493"/>
    </location>
</feature>
<feature type="domain" description="Ig-like C2-type 6">
    <location>
        <begin position="497"/>
        <end position="586"/>
    </location>
</feature>
<feature type="domain" description="Fibronectin type-III 1" evidence="4">
    <location>
        <begin position="599"/>
        <end position="697"/>
    </location>
</feature>
<feature type="domain" description="Fibronectin type-III 2" evidence="4">
    <location>
        <begin position="702"/>
        <end position="799"/>
    </location>
</feature>
<feature type="domain" description="Fibronectin type-III 3" evidence="4">
    <location>
        <begin position="804"/>
        <end position="899"/>
    </location>
</feature>
<feature type="domain" description="Fibronectin type-III 4" evidence="4">
    <location>
        <begin position="900"/>
        <end position="995"/>
    </location>
</feature>
<feature type="region of interest" description="Disordered" evidence="5">
    <location>
        <begin position="685"/>
        <end position="710"/>
    </location>
</feature>
<feature type="compositionally biased region" description="Basic and acidic residues" evidence="5">
    <location>
        <begin position="687"/>
        <end position="696"/>
    </location>
</feature>
<feature type="lipid moiety-binding region" description="GPI-anchor amidated serine" evidence="2">
    <location>
        <position position="1000"/>
    </location>
</feature>
<feature type="glycosylation site" description="N-linked (GlcNAc...) asparagine" evidence="2">
    <location>
        <position position="65"/>
    </location>
</feature>
<feature type="glycosylation site" description="N-linked (GlcNAc...) asparagine" evidence="2">
    <location>
        <position position="90"/>
    </location>
</feature>
<feature type="glycosylation site" description="N-linked (GlcNAc...) asparagine" evidence="2">
    <location>
        <position position="191"/>
    </location>
</feature>
<feature type="glycosylation site" description="N-linked (GlcNAc...) asparagine" evidence="2">
    <location>
        <position position="370"/>
    </location>
</feature>
<feature type="glycosylation site" description="N-linked (GlcNAc...) asparagine" evidence="2">
    <location>
        <position position="375"/>
    </location>
</feature>
<feature type="glycosylation site" description="N-linked (GlcNAc...) asparagine" evidence="2">
    <location>
        <position position="466"/>
    </location>
</feature>
<feature type="glycosylation site" description="N-linked (GlcNAc...) asparagine" evidence="2">
    <location>
        <position position="705"/>
    </location>
</feature>
<feature type="glycosylation site" description="N-linked (GlcNAc...) asparagine" evidence="2">
    <location>
        <position position="764"/>
    </location>
</feature>
<feature type="glycosylation site" description="N-linked (GlcNAc...) asparagine" evidence="2">
    <location>
        <position position="858"/>
    </location>
</feature>
<feature type="glycosylation site" description="N-linked (GlcNAc...) asparagine" evidence="2">
    <location>
        <position position="893"/>
    </location>
</feature>
<feature type="glycosylation site" description="N-linked (GlcNAc...) asparagine" evidence="2">
    <location>
        <position position="911"/>
    </location>
</feature>
<feature type="glycosylation site" description="N-linked (GlcNAc...) asparagine" evidence="2">
    <location>
        <position position="929"/>
    </location>
</feature>
<feature type="glycosylation site" description="N-linked (GlcNAc...) asparagine" evidence="2">
    <location>
        <position position="954"/>
    </location>
</feature>
<feature type="disulfide bond" evidence="3">
    <location>
        <begin position="50"/>
        <end position="100"/>
    </location>
</feature>
<feature type="disulfide bond" evidence="3">
    <location>
        <begin position="144"/>
        <end position="194"/>
    </location>
</feature>
<feature type="disulfide bond" evidence="3">
    <location>
        <begin position="247"/>
        <end position="295"/>
    </location>
</feature>
<feature type="disulfide bond" evidence="3">
    <location>
        <begin position="337"/>
        <end position="384"/>
    </location>
</feature>
<feature type="disulfide bond" evidence="3">
    <location>
        <begin position="429"/>
        <end position="477"/>
    </location>
</feature>
<feature type="disulfide bond" evidence="3">
    <location>
        <begin position="519"/>
        <end position="576"/>
    </location>
</feature>
<keyword id="KW-0130">Cell adhesion</keyword>
<keyword id="KW-1003">Cell membrane</keyword>
<keyword id="KW-1015">Disulfide bond</keyword>
<keyword id="KW-0325">Glycoprotein</keyword>
<keyword id="KW-0336">GPI-anchor</keyword>
<keyword id="KW-0393">Immunoglobulin domain</keyword>
<keyword id="KW-0449">Lipoprotein</keyword>
<keyword id="KW-0472">Membrane</keyword>
<keyword id="KW-1185">Reference proteome</keyword>
<keyword id="KW-0677">Repeat</keyword>
<keyword id="KW-0964">Secreted</keyword>
<keyword id="KW-0732">Signal</keyword>
<sequence length="1026" mass="113393">MRLPWELLVLQSFMLCLADDYTLHGPVFVQEPSHVMFPLDSEEKKVKLSCEVKGNPKPHIRWKLNGTDVDIGMDFRYSVVEGSLLINNPNKTQDSGTYQCIATNSFGTIVSREAKLQFAYLENFKTRTRSTVSVRRGQGMVLLCGPPPHSGELSYAWIFNEHPSYQDNRRFVSQETGNLYIAKVEKADVGNYTCVVTNTVTSHQVLGPPTPLILRNDGVMGEYEPKIEVQFPETVPAEKGSTVKLECFALGNPVPTILWRRADGKPIARKARRHKSSGILEIPNFQQEDAGSYECVAENSRGKNIAKGQVTFYAQPNWVQIINDIHVAMEESVFWECKANGRPKPTYRWLKNGDPLLTRERIQIEQGTLNITIVNLSDAGMYQCVAENKHGVIYASAELSVIAESPDFSRTLLKRVTLVKVGGEVVIECKPKASPRPVYTWRKGREILRENERITISEDGNLRIINVTKSDAGSYTCIATNHFGTASSTGNVVVKDPTKVMVPPSSMDVTVGESIVLPCQVTHDHSLDIVFTWTFNGHLIDFDKDGDHFERVGGQDSAGDLMIRNIQLKHAGKYVCMVQTSVDKLSAAADLIVRGPPGPPEAVTIDEITDTTAQLSWRPGPDNHSPITMYVIQARTPFSVGWQAVSTVPELVDGKTFTATVVGLNPWVEYEFRTVAANVIGIGEPSRPSEKRRTEEALPEVTPANVSGGGGSKSELVITWETVPEELQNGRGFGYVVAFRPHGKMIWMLTVLASADASRYVFRNESVRPFSPFEVKVGVFNNKGEGPFSPTTLVYSAEEEPTKPPASIFARSLSATDIEVFWASPIGKNRGRIQGYEVKYWRHDDKEENARKIRTVGNQTSTKITNLKGNALYHLSVKAYNSAGTGPSSAAVNVTTRKPPPSQPPGNIIWNSSDSKIILNWDQVKALDNESEVKGYKVLYRWNRQSSTSVIETNKTSVELSLPFDEDYIIEIKPFSDGGDGSSSEQIRIPKISNSYARGSGASTSNACTLSAISTIMISLTARSSL</sequence>
<dbReference type="EMBL" id="U35371">
    <property type="protein sequence ID" value="AAC52262.1"/>
    <property type="molecule type" value="mRNA"/>
</dbReference>
<dbReference type="RefSeq" id="NP_446331.1">
    <property type="nucleotide sequence ID" value="NM_053879.2"/>
</dbReference>
<dbReference type="RefSeq" id="XP_017447884.1">
    <property type="nucleotide sequence ID" value="XM_017592395.3"/>
</dbReference>
<dbReference type="RefSeq" id="XP_017447885.1">
    <property type="nucleotide sequence ID" value="XM_017592396.3"/>
</dbReference>
<dbReference type="RefSeq" id="XP_063141482.1">
    <property type="nucleotide sequence ID" value="XM_063285412.1"/>
</dbReference>
<dbReference type="RefSeq" id="XP_063141483.1">
    <property type="nucleotide sequence ID" value="XM_063285413.1"/>
</dbReference>
<dbReference type="SMR" id="Q62845"/>
<dbReference type="FunCoup" id="Q62845">
    <property type="interactions" value="1737"/>
</dbReference>
<dbReference type="STRING" id="10116.ENSRNOP00000007788"/>
<dbReference type="GlyCosmos" id="Q62845">
    <property type="glycosylation" value="13 sites, No reported glycans"/>
</dbReference>
<dbReference type="GlyGen" id="Q62845">
    <property type="glycosylation" value="13 sites"/>
</dbReference>
<dbReference type="PhosphoSitePlus" id="Q62845"/>
<dbReference type="PaxDb" id="10116-ENSRNOP00000007788"/>
<dbReference type="Ensembl" id="ENSRNOT00000007788.7">
    <property type="protein sequence ID" value="ENSRNOP00000007788.5"/>
    <property type="gene ID" value="ENSRNOG00000005652.8"/>
</dbReference>
<dbReference type="GeneID" id="116658"/>
<dbReference type="KEGG" id="rno:116658"/>
<dbReference type="AGR" id="RGD:621361"/>
<dbReference type="CTD" id="152330"/>
<dbReference type="RGD" id="621361">
    <property type="gene designation" value="Cntn4"/>
</dbReference>
<dbReference type="eggNOG" id="KOG3513">
    <property type="taxonomic scope" value="Eukaryota"/>
</dbReference>
<dbReference type="GeneTree" id="ENSGT00940000155198"/>
<dbReference type="InParanoid" id="Q62845"/>
<dbReference type="OMA" id="RIQGYEX"/>
<dbReference type="OrthoDB" id="5982258at2759"/>
<dbReference type="PhylomeDB" id="Q62845"/>
<dbReference type="TreeFam" id="TF351103"/>
<dbReference type="Reactome" id="R-RNO-163125">
    <property type="pathway name" value="Post-translational modification: synthesis of GPI-anchored proteins"/>
</dbReference>
<dbReference type="PRO" id="PR:Q62845"/>
<dbReference type="Proteomes" id="UP000002494">
    <property type="component" value="Chromosome 4"/>
</dbReference>
<dbReference type="Bgee" id="ENSRNOG00000005652">
    <property type="expression patterns" value="Expressed in frontal cortex and 2 other cell types or tissues"/>
</dbReference>
<dbReference type="ExpressionAtlas" id="Q62845">
    <property type="expression patterns" value="baseline and differential"/>
</dbReference>
<dbReference type="GO" id="GO:0030424">
    <property type="term" value="C:axon"/>
    <property type="evidence" value="ECO:0000318"/>
    <property type="project" value="GO_Central"/>
</dbReference>
<dbReference type="GO" id="GO:0005576">
    <property type="term" value="C:extracellular region"/>
    <property type="evidence" value="ECO:0007669"/>
    <property type="project" value="UniProtKB-SubCell"/>
</dbReference>
<dbReference type="GO" id="GO:0005886">
    <property type="term" value="C:plasma membrane"/>
    <property type="evidence" value="ECO:0000318"/>
    <property type="project" value="GO_Central"/>
</dbReference>
<dbReference type="GO" id="GO:0098552">
    <property type="term" value="C:side of membrane"/>
    <property type="evidence" value="ECO:0007669"/>
    <property type="project" value="UniProtKB-KW"/>
</dbReference>
<dbReference type="GO" id="GO:0045202">
    <property type="term" value="C:synapse"/>
    <property type="evidence" value="ECO:0000318"/>
    <property type="project" value="GO_Central"/>
</dbReference>
<dbReference type="GO" id="GO:0098632">
    <property type="term" value="F:cell-cell adhesion mediator activity"/>
    <property type="evidence" value="ECO:0000318"/>
    <property type="project" value="GO_Central"/>
</dbReference>
<dbReference type="GO" id="GO:0007411">
    <property type="term" value="P:axon guidance"/>
    <property type="evidence" value="ECO:0000318"/>
    <property type="project" value="GO_Central"/>
</dbReference>
<dbReference type="GO" id="GO:0007420">
    <property type="term" value="P:brain development"/>
    <property type="evidence" value="ECO:0000270"/>
    <property type="project" value="UniProtKB"/>
</dbReference>
<dbReference type="GO" id="GO:0070593">
    <property type="term" value="P:dendrite self-avoidance"/>
    <property type="evidence" value="ECO:0000318"/>
    <property type="project" value="GO_Central"/>
</dbReference>
<dbReference type="GO" id="GO:0007156">
    <property type="term" value="P:homophilic cell adhesion via plasma membrane adhesion molecules"/>
    <property type="evidence" value="ECO:0000318"/>
    <property type="project" value="GO_Central"/>
</dbReference>
<dbReference type="GO" id="GO:0045665">
    <property type="term" value="P:negative regulation of neuron differentiation"/>
    <property type="evidence" value="ECO:0000250"/>
    <property type="project" value="UniProtKB"/>
</dbReference>
<dbReference type="GO" id="GO:0007399">
    <property type="term" value="P:nervous system development"/>
    <property type="evidence" value="ECO:0000250"/>
    <property type="project" value="UniProtKB"/>
</dbReference>
<dbReference type="GO" id="GO:0031175">
    <property type="term" value="P:neuron projection development"/>
    <property type="evidence" value="ECO:0000314"/>
    <property type="project" value="UniProtKB"/>
</dbReference>
<dbReference type="GO" id="GO:0050808">
    <property type="term" value="P:synapse organization"/>
    <property type="evidence" value="ECO:0000318"/>
    <property type="project" value="GO_Central"/>
</dbReference>
<dbReference type="CDD" id="cd00063">
    <property type="entry name" value="FN3"/>
    <property type="match status" value="4"/>
</dbReference>
<dbReference type="CDD" id="cd05853">
    <property type="entry name" value="Ig6_Contactin-4"/>
    <property type="match status" value="1"/>
</dbReference>
<dbReference type="FunFam" id="2.60.40.10:FF:000035">
    <property type="entry name" value="Contactin 1"/>
    <property type="match status" value="1"/>
</dbReference>
<dbReference type="FunFam" id="2.60.40.10:FF:000044">
    <property type="entry name" value="Contactin 1"/>
    <property type="match status" value="1"/>
</dbReference>
<dbReference type="FunFam" id="2.60.40.10:FF:000047">
    <property type="entry name" value="Contactin 1"/>
    <property type="match status" value="1"/>
</dbReference>
<dbReference type="FunFam" id="2.60.40.10:FF:000052">
    <property type="entry name" value="Contactin 1"/>
    <property type="match status" value="1"/>
</dbReference>
<dbReference type="FunFam" id="2.60.40.10:FF:000054">
    <property type="entry name" value="Contactin 1"/>
    <property type="match status" value="1"/>
</dbReference>
<dbReference type="FunFam" id="2.60.40.10:FF:000064">
    <property type="entry name" value="Contactin 1"/>
    <property type="match status" value="1"/>
</dbReference>
<dbReference type="FunFam" id="2.60.40.10:FF:000004">
    <property type="entry name" value="DCC isoform 1"/>
    <property type="match status" value="2"/>
</dbReference>
<dbReference type="FunFam" id="2.60.40.10:FF:000005">
    <property type="entry name" value="Neuronal cell adhesion molecule"/>
    <property type="match status" value="1"/>
</dbReference>
<dbReference type="FunFam" id="2.60.40.10:FF:000028">
    <property type="entry name" value="Neuronal cell adhesion molecule"/>
    <property type="match status" value="1"/>
</dbReference>
<dbReference type="Gene3D" id="2.60.40.10">
    <property type="entry name" value="Immunoglobulins"/>
    <property type="match status" value="10"/>
</dbReference>
<dbReference type="InterPro" id="IPR033007">
    <property type="entry name" value="CNTN4_Ig6"/>
</dbReference>
<dbReference type="InterPro" id="IPR003961">
    <property type="entry name" value="FN3_dom"/>
</dbReference>
<dbReference type="InterPro" id="IPR036116">
    <property type="entry name" value="FN3_sf"/>
</dbReference>
<dbReference type="InterPro" id="IPR007110">
    <property type="entry name" value="Ig-like_dom"/>
</dbReference>
<dbReference type="InterPro" id="IPR036179">
    <property type="entry name" value="Ig-like_dom_sf"/>
</dbReference>
<dbReference type="InterPro" id="IPR013783">
    <property type="entry name" value="Ig-like_fold"/>
</dbReference>
<dbReference type="InterPro" id="IPR013098">
    <property type="entry name" value="Ig_I-set"/>
</dbReference>
<dbReference type="InterPro" id="IPR003599">
    <property type="entry name" value="Ig_sub"/>
</dbReference>
<dbReference type="InterPro" id="IPR003598">
    <property type="entry name" value="Ig_sub2"/>
</dbReference>
<dbReference type="PANTHER" id="PTHR44170:SF18">
    <property type="entry name" value="CONTACTIN 3B-RELATED"/>
    <property type="match status" value="1"/>
</dbReference>
<dbReference type="PANTHER" id="PTHR44170">
    <property type="entry name" value="PROTEIN SIDEKICK"/>
    <property type="match status" value="1"/>
</dbReference>
<dbReference type="Pfam" id="PF00041">
    <property type="entry name" value="fn3"/>
    <property type="match status" value="2"/>
</dbReference>
<dbReference type="Pfam" id="PF07679">
    <property type="entry name" value="I-set"/>
    <property type="match status" value="3"/>
</dbReference>
<dbReference type="Pfam" id="PF13927">
    <property type="entry name" value="Ig_3"/>
    <property type="match status" value="3"/>
</dbReference>
<dbReference type="SMART" id="SM00060">
    <property type="entry name" value="FN3"/>
    <property type="match status" value="4"/>
</dbReference>
<dbReference type="SMART" id="SM00409">
    <property type="entry name" value="IG"/>
    <property type="match status" value="6"/>
</dbReference>
<dbReference type="SMART" id="SM00408">
    <property type="entry name" value="IGc2"/>
    <property type="match status" value="5"/>
</dbReference>
<dbReference type="SUPFAM" id="SSF49265">
    <property type="entry name" value="Fibronectin type III"/>
    <property type="match status" value="2"/>
</dbReference>
<dbReference type="SUPFAM" id="SSF48726">
    <property type="entry name" value="Immunoglobulin"/>
    <property type="match status" value="6"/>
</dbReference>
<dbReference type="PROSITE" id="PS50853">
    <property type="entry name" value="FN3"/>
    <property type="match status" value="4"/>
</dbReference>
<dbReference type="PROSITE" id="PS50835">
    <property type="entry name" value="IG_LIKE"/>
    <property type="match status" value="6"/>
</dbReference>
<proteinExistence type="evidence at protein level"/>
<comment type="function">
    <text evidence="7">Contactins mediate cell surface interactions during nervous system development. Has some neurite outgrowth-promoting activity. May be involved in synaptogenesis.</text>
</comment>
<comment type="subunit">
    <text evidence="1">Interacts with PTPRG.</text>
</comment>
<comment type="subcellular location">
    <subcellularLocation>
        <location evidence="1">Cell membrane</location>
        <topology evidence="1">Lipid-anchor</topology>
        <topology evidence="1">GPI-anchor</topology>
    </subcellularLocation>
    <subcellularLocation>
        <location evidence="6">Secreted</location>
    </subcellularLocation>
</comment>
<comment type="tissue specificity">
    <text evidence="7">Specifically expressed in the nervous system. Not expressed in heart, spleen, lung, liver, kidney or skeletal muscle. In the hippocampus, it is highly expressed in CA1 pyramidal cells and weakly expressed in other regions of the hippocampus.</text>
</comment>
<comment type="similarity">
    <text evidence="8">Belongs to the immunoglobulin superfamily. Contactin family.</text>
</comment>
<name>CNTN4_RAT</name>
<gene>
    <name type="primary">Cntn4</name>
</gene>
<protein>
    <recommendedName>
        <fullName>Contactin-4</fullName>
    </recommendedName>
    <alternativeName>
        <fullName>Brain-derived immunoglobulin superfamily protein 2</fullName>
        <shortName>BIG-2</shortName>
    </alternativeName>
</protein>
<reference key="1">
    <citation type="journal article" date="1995" name="J. Neurobiol.">
        <title>Overlapping and differential expression of BIG-2, BIG-1, TAG-1, and F3: four members of an axon-associated cell adhesion molecule subgroup of the immunoglobulin superfamily.</title>
        <authorList>
            <person name="Yoshihara Y."/>
            <person name="Kawasaki M."/>
            <person name="Tamada A."/>
            <person name="Nagata S."/>
            <person name="Kagamiyama H."/>
            <person name="Mori K."/>
        </authorList>
    </citation>
    <scope>NUCLEOTIDE SEQUENCE [MRNA]</scope>
    <scope>FUNCTION</scope>
    <scope>TISSUE SPECIFICITY</scope>
    <source>
        <strain>Wistar</strain>
        <tissue>Brain</tissue>
    </source>
</reference>
<reference key="2">
    <citation type="journal article" date="2006" name="Biochim. Biophys. Acta">
        <title>Identification and expression of a new splicing variant of FAD-sulfhydryl oxidase in adult rat brain.</title>
        <authorList>
            <person name="Radom J."/>
            <person name="Colin D."/>
            <person name="Thiebault F."/>
            <person name="Dognin-Bergeret M.J."/>
            <person name="Mairet-Coello G."/>
            <person name="Esnard-Feve A."/>
            <person name="Fellmann D."/>
            <person name="Jouvenot M."/>
        </authorList>
    </citation>
    <scope>SUBCELLULAR LOCATION</scope>
    <scope>IDENTIFICATION BY MASS SPECTROMETRY</scope>
</reference>
<evidence type="ECO:0000250" key="1"/>
<evidence type="ECO:0000255" key="2"/>
<evidence type="ECO:0000255" key="3">
    <source>
        <dbReference type="PROSITE-ProRule" id="PRU00114"/>
    </source>
</evidence>
<evidence type="ECO:0000255" key="4">
    <source>
        <dbReference type="PROSITE-ProRule" id="PRU00316"/>
    </source>
</evidence>
<evidence type="ECO:0000256" key="5">
    <source>
        <dbReference type="SAM" id="MobiDB-lite"/>
    </source>
</evidence>
<evidence type="ECO:0000269" key="6">
    <source>
    </source>
</evidence>
<evidence type="ECO:0000269" key="7">
    <source>
    </source>
</evidence>
<evidence type="ECO:0000305" key="8"/>
<organism>
    <name type="scientific">Rattus norvegicus</name>
    <name type="common">Rat</name>
    <dbReference type="NCBI Taxonomy" id="10116"/>
    <lineage>
        <taxon>Eukaryota</taxon>
        <taxon>Metazoa</taxon>
        <taxon>Chordata</taxon>
        <taxon>Craniata</taxon>
        <taxon>Vertebrata</taxon>
        <taxon>Euteleostomi</taxon>
        <taxon>Mammalia</taxon>
        <taxon>Eutheria</taxon>
        <taxon>Euarchontoglires</taxon>
        <taxon>Glires</taxon>
        <taxon>Rodentia</taxon>
        <taxon>Myomorpha</taxon>
        <taxon>Muroidea</taxon>
        <taxon>Muridae</taxon>
        <taxon>Murinae</taxon>
        <taxon>Rattus</taxon>
    </lineage>
</organism>
<accession>Q62845</accession>